<protein>
    <recommendedName>
        <fullName>E3 ubiquitin-protein ligase IE2</fullName>
        <ecNumber>2.3.2.27</ecNumber>
    </recommendedName>
    <alternativeName>
        <fullName>Immediate-early protein IE2</fullName>
    </alternativeName>
    <alternativeName>
        <fullName>RING-type E3 ubiquitin transferase IE2</fullName>
    </alternativeName>
</protein>
<accession>O92503</accession>
<gene>
    <name type="primary">IE2</name>
</gene>
<feature type="chain" id="PRO_0000396076" description="E3 ubiquitin-protein ligase IE2">
    <location>
        <begin position="1"/>
        <end position="422"/>
    </location>
</feature>
<feature type="zinc finger region" description="RING-type; degenerate" evidence="2">
    <location>
        <begin position="220"/>
        <end position="268"/>
    </location>
</feature>
<feature type="region of interest" description="Disordered" evidence="3">
    <location>
        <begin position="1"/>
        <end position="86"/>
    </location>
</feature>
<feature type="region of interest" description="Disordered" evidence="3">
    <location>
        <begin position="165"/>
        <end position="215"/>
    </location>
</feature>
<feature type="coiled-coil region" evidence="1">
    <location>
        <begin position="314"/>
        <end position="414"/>
    </location>
</feature>
<feature type="compositionally biased region" description="Polar residues" evidence="3">
    <location>
        <begin position="1"/>
        <end position="10"/>
    </location>
</feature>
<feature type="compositionally biased region" description="Basic residues" evidence="3">
    <location>
        <begin position="14"/>
        <end position="26"/>
    </location>
</feature>
<feature type="compositionally biased region" description="Low complexity" evidence="3">
    <location>
        <begin position="36"/>
        <end position="63"/>
    </location>
</feature>
<feature type="compositionally biased region" description="Basic and acidic residues" evidence="3">
    <location>
        <begin position="71"/>
        <end position="80"/>
    </location>
</feature>
<feature type="compositionally biased region" description="Polar residues" evidence="3">
    <location>
        <begin position="179"/>
        <end position="196"/>
    </location>
</feature>
<feature type="compositionally biased region" description="Acidic residues" evidence="3">
    <location>
        <begin position="200"/>
        <end position="215"/>
    </location>
</feature>
<organism>
    <name type="scientific">Bombyx mori nuclear polyhedrosis virus</name>
    <name type="common">BmNPV</name>
    <dbReference type="NCBI Taxonomy" id="271108"/>
    <lineage>
        <taxon>Viruses</taxon>
        <taxon>Viruses incertae sedis</taxon>
        <taxon>Naldaviricetes</taxon>
        <taxon>Lefavirales</taxon>
        <taxon>Baculoviridae</taxon>
        <taxon>Alphabaculovirus</taxon>
        <taxon>Alphabaculovirus bomori</taxon>
    </lineage>
</organism>
<reference key="1">
    <citation type="journal article" date="1999" name="J. Gen. Virol.">
        <title>Sequence analysis of the genome of Bombyx mori nucleopolyhedrovirus.</title>
        <authorList>
            <person name="Gomi S."/>
            <person name="Majima K."/>
            <person name="Maeda S."/>
        </authorList>
    </citation>
    <scope>NUCLEOTIDE SEQUENCE [LARGE SCALE GENOMIC DNA]</scope>
    <source>
        <strain>T3</strain>
    </source>
</reference>
<reference key="2">
    <citation type="journal article" date="2005" name="J. Gen. Virol.">
        <title>Formation of Bombyx mori nucleopolyhedrovirus IE2 nuclear foci is regulated by the functional domains for oligomerization and ubiquitin ligase activity.</title>
        <authorList>
            <person name="Imai N."/>
            <person name="Matsumoto S."/>
            <person name="Kang W."/>
        </authorList>
    </citation>
    <scope>FUNCTION</scope>
    <scope>SUBCELLULAR LOCATION</scope>
    <scope>SUBUNIT</scope>
</reference>
<organismHost>
    <name type="scientific">Bombyx mori</name>
    <name type="common">Silk moth</name>
    <dbReference type="NCBI Taxonomy" id="7091"/>
</organismHost>
<name>VIE2_NPVBM</name>
<sequence>MSRQINAVTPSSSSRRHRLSLSRRRINFTTSPEALPSSSSRSQPSSSSRSQPYSSSRSQPYSSSRRRRRQERSQEQRVSEDNVQIIGNANEPLTRTYHSQGVTYHVHGQVNISNDDPLLSQEDDTIESVDRASQQYQNSIASETAAQRALQRGLDLESQLMSEISPRSPAYSPPYPSNDVLSQSPDLFDSPQSPQQHELELEDEDEEEEEEEGEEVEVSCNICFTTLKDTKNVDSSFVTSIDCNHAVCFKCYVRIIMDNSTYKCFCSASSSDFRVYNKHGYVEFMPLTLIRNRDSIKQHWRELLENNTVNNRIIDLNDVERLERERSELRAKNSQVEHKMTMLNCDYAMLKHEHKITELKLKWANRDLEEFTKKTQELQSTVNDLQEQLRKQVAESQAKFSQFERRNSELVAELYTIEMSKP</sequence>
<evidence type="ECO:0000255" key="1"/>
<evidence type="ECO:0000255" key="2">
    <source>
        <dbReference type="PROSITE-ProRule" id="PRU00175"/>
    </source>
</evidence>
<evidence type="ECO:0000256" key="3">
    <source>
        <dbReference type="SAM" id="MobiDB-lite"/>
    </source>
</evidence>
<evidence type="ECO:0000269" key="4">
    <source>
    </source>
</evidence>
<evidence type="ECO:0000305" key="5"/>
<keyword id="KW-0175">Coiled coil</keyword>
<keyword id="KW-0244">Early protein</keyword>
<keyword id="KW-1048">Host nucleus</keyword>
<keyword id="KW-0945">Host-virus interaction</keyword>
<keyword id="KW-0479">Metal-binding</keyword>
<keyword id="KW-1128">Modulation of host ubiquitin pathway by viral E3 ligase</keyword>
<keyword id="KW-1130">Modulation of host ubiquitin pathway by virus</keyword>
<keyword id="KW-0808">Transferase</keyword>
<keyword id="KW-0832">Ubl conjugation</keyword>
<keyword id="KW-0833">Ubl conjugation pathway</keyword>
<keyword id="KW-0862">Zinc</keyword>
<keyword id="KW-0863">Zinc-finger</keyword>
<proteinExistence type="evidence at protein level"/>
<dbReference type="EC" id="2.3.2.27"/>
<dbReference type="EMBL" id="L33180">
    <property type="protein sequence ID" value="AAC63817.1"/>
    <property type="molecule type" value="Genomic_DNA"/>
</dbReference>
<dbReference type="PIR" id="T41888">
    <property type="entry name" value="T41888"/>
</dbReference>
<dbReference type="SMR" id="O92503"/>
<dbReference type="MINT" id="O92503"/>
<dbReference type="KEGG" id="vg:1488759"/>
<dbReference type="OrthoDB" id="13124at10239"/>
<dbReference type="Proteomes" id="UP000204315">
    <property type="component" value="Genome"/>
</dbReference>
<dbReference type="GO" id="GO:0042025">
    <property type="term" value="C:host cell nucleus"/>
    <property type="evidence" value="ECO:0007669"/>
    <property type="project" value="UniProtKB-SubCell"/>
</dbReference>
<dbReference type="GO" id="GO:0016740">
    <property type="term" value="F:transferase activity"/>
    <property type="evidence" value="ECO:0007669"/>
    <property type="project" value="UniProtKB-KW"/>
</dbReference>
<dbReference type="GO" id="GO:0008270">
    <property type="term" value="F:zinc ion binding"/>
    <property type="evidence" value="ECO:0007669"/>
    <property type="project" value="UniProtKB-KW"/>
</dbReference>
<dbReference type="GO" id="GO:0039648">
    <property type="term" value="P:symbiont-mediated perturbation of host ubiquitin-like protein modification"/>
    <property type="evidence" value="ECO:0007669"/>
    <property type="project" value="UniProtKB-KW"/>
</dbReference>
<dbReference type="Gene3D" id="3.30.40.10">
    <property type="entry name" value="Zinc/RING finger domain, C3HC4 (zinc finger)"/>
    <property type="match status" value="1"/>
</dbReference>
<dbReference type="InterPro" id="IPR018957">
    <property type="entry name" value="Znf_C3HC4_RING-type"/>
</dbReference>
<dbReference type="InterPro" id="IPR001841">
    <property type="entry name" value="Znf_RING"/>
</dbReference>
<dbReference type="InterPro" id="IPR013083">
    <property type="entry name" value="Znf_RING/FYVE/PHD"/>
</dbReference>
<dbReference type="InterPro" id="IPR017907">
    <property type="entry name" value="Znf_RING_CS"/>
</dbReference>
<dbReference type="Pfam" id="PF00097">
    <property type="entry name" value="zf-C3HC4"/>
    <property type="match status" value="1"/>
</dbReference>
<dbReference type="SUPFAM" id="SSF57850">
    <property type="entry name" value="RING/U-box"/>
    <property type="match status" value="1"/>
</dbReference>
<dbReference type="PROSITE" id="PS00518">
    <property type="entry name" value="ZF_RING_1"/>
    <property type="match status" value="1"/>
</dbReference>
<dbReference type="PROSITE" id="PS50089">
    <property type="entry name" value="ZF_RING_2"/>
    <property type="match status" value="1"/>
</dbReference>
<comment type="function">
    <text evidence="4">RING-finger E3 ubiquitin ligase that plays an important regulatory role during the initial stages of infection. Migrates to specific nuclear foci early in infection supposely to prepare the sites for viral replication by targeting and ubiquitinating host proteins.</text>
</comment>
<comment type="catalytic activity">
    <reaction>
        <text>S-ubiquitinyl-[E2 ubiquitin-conjugating enzyme]-L-cysteine + [acceptor protein]-L-lysine = [E2 ubiquitin-conjugating enzyme]-L-cysteine + N(6)-ubiquitinyl-[acceptor protein]-L-lysine.</text>
        <dbReference type="EC" id="2.3.2.27"/>
    </reaction>
</comment>
<comment type="subunit">
    <text evidence="4">Homooligomer.</text>
</comment>
<comment type="subcellular location">
    <subcellularLocation>
        <location evidence="4">Host nucleus</location>
    </subcellularLocation>
</comment>
<comment type="PTM">
    <text>Auto-ubiquitinated.</text>
</comment>
<comment type="similarity">
    <text evidence="5">Belongs to the alphabaculovirus IE2 protein family.</text>
</comment>